<reference key="1">
    <citation type="journal article" date="2006" name="J. Mol. Evol.">
        <title>The mammalian 2'-5' oligoadenylate synthetase gene family: evidence for concerted evolution of paralogous Oas1 genes in Rodentia and Artiodactyla.</title>
        <authorList>
            <person name="Perelygin A.A."/>
            <person name="Zharkikh A.A."/>
            <person name="Scherbik S.V."/>
            <person name="Brinton M.A."/>
        </authorList>
    </citation>
    <scope>NUCLEOTIDE SEQUENCE [MRNA]</scope>
</reference>
<reference key="2">
    <citation type="journal article" date="2009" name="Genome Biol.">
        <title>A whole-genome assembly of the domestic cow, Bos taurus.</title>
        <authorList>
            <person name="Zimin A.V."/>
            <person name="Delcher A.L."/>
            <person name="Florea L."/>
            <person name="Kelley D.R."/>
            <person name="Schatz M.C."/>
            <person name="Puiu D."/>
            <person name="Hanrahan F."/>
            <person name="Pertea G."/>
            <person name="Van Tassell C.P."/>
            <person name="Sonstegard T.S."/>
            <person name="Marcais G."/>
            <person name="Roberts M."/>
            <person name="Subramanian P."/>
            <person name="Yorke J.A."/>
            <person name="Salzberg S.L."/>
        </authorList>
    </citation>
    <scope>NUCLEOTIDE SEQUENCE [LARGE SCALE GENOMIC DNA]</scope>
    <source>
        <strain>Hereford</strain>
    </source>
</reference>
<dbReference type="EC" id="2.7.7.84"/>
<dbReference type="EMBL" id="AY599197">
    <property type="protein sequence ID" value="AAT44896.1"/>
    <property type="molecule type" value="mRNA"/>
</dbReference>
<dbReference type="EMBL" id="DAAA02045423">
    <property type="status" value="NOT_ANNOTATED_CDS"/>
    <property type="molecule type" value="Genomic_DNA"/>
</dbReference>
<dbReference type="EMBL" id="DAAA02045424">
    <property type="status" value="NOT_ANNOTATED_CDS"/>
    <property type="molecule type" value="Genomic_DNA"/>
</dbReference>
<dbReference type="EMBL" id="DAAA02045425">
    <property type="status" value="NOT_ANNOTATED_CDS"/>
    <property type="molecule type" value="Genomic_DNA"/>
</dbReference>
<dbReference type="RefSeq" id="NP_001019728.1">
    <property type="nucleotide sequence ID" value="NM_001024557.1"/>
</dbReference>
<dbReference type="SMR" id="F1N3B8"/>
<dbReference type="FunCoup" id="F1N3B8">
    <property type="interactions" value="242"/>
</dbReference>
<dbReference type="STRING" id="9913.ENSBTAP00000019477"/>
<dbReference type="PaxDb" id="9913-ENSBTAP00000019477"/>
<dbReference type="GeneID" id="529660"/>
<dbReference type="KEGG" id="bta:529660"/>
<dbReference type="CTD" id="4939"/>
<dbReference type="VEuPathDB" id="HostDB:ENSBTAG00000014628"/>
<dbReference type="eggNOG" id="ENOG502S649">
    <property type="taxonomic scope" value="Eukaryota"/>
</dbReference>
<dbReference type="HOGENOM" id="CLU_026275_0_0_1"/>
<dbReference type="InParanoid" id="F1N3B8"/>
<dbReference type="OMA" id="KQCERKM"/>
<dbReference type="OrthoDB" id="1885901at2759"/>
<dbReference type="TreeFam" id="TF329749"/>
<dbReference type="Proteomes" id="UP000009136">
    <property type="component" value="Chromosome 17"/>
</dbReference>
<dbReference type="Bgee" id="ENSBTAG00000014628">
    <property type="expression patterns" value="Expressed in neutrophil and 88 other cell types or tissues"/>
</dbReference>
<dbReference type="GO" id="GO:0005829">
    <property type="term" value="C:cytosol"/>
    <property type="evidence" value="ECO:0000318"/>
    <property type="project" value="GO_Central"/>
</dbReference>
<dbReference type="GO" id="GO:0016020">
    <property type="term" value="C:membrane"/>
    <property type="evidence" value="ECO:0000318"/>
    <property type="project" value="GO_Central"/>
</dbReference>
<dbReference type="GO" id="GO:0005654">
    <property type="term" value="C:nucleoplasm"/>
    <property type="evidence" value="ECO:0000318"/>
    <property type="project" value="GO_Central"/>
</dbReference>
<dbReference type="GO" id="GO:0048471">
    <property type="term" value="C:perinuclear region of cytoplasm"/>
    <property type="evidence" value="ECO:0000250"/>
    <property type="project" value="UniProtKB"/>
</dbReference>
<dbReference type="GO" id="GO:0001730">
    <property type="term" value="F:2'-5'-oligoadenylate synthetase activity"/>
    <property type="evidence" value="ECO:0000250"/>
    <property type="project" value="UniProtKB"/>
</dbReference>
<dbReference type="GO" id="GO:0005524">
    <property type="term" value="F:ATP binding"/>
    <property type="evidence" value="ECO:0000250"/>
    <property type="project" value="UniProtKB"/>
</dbReference>
<dbReference type="GO" id="GO:0003725">
    <property type="term" value="F:double-stranded RNA binding"/>
    <property type="evidence" value="ECO:0000250"/>
    <property type="project" value="UniProtKB"/>
</dbReference>
<dbReference type="GO" id="GO:0046872">
    <property type="term" value="F:metal ion binding"/>
    <property type="evidence" value="ECO:0007669"/>
    <property type="project" value="UniProtKB-KW"/>
</dbReference>
<dbReference type="GO" id="GO:0140374">
    <property type="term" value="P:antiviral innate immune response"/>
    <property type="evidence" value="ECO:0000318"/>
    <property type="project" value="GO_Central"/>
</dbReference>
<dbReference type="GO" id="GO:0051607">
    <property type="term" value="P:defense response to virus"/>
    <property type="evidence" value="ECO:0000250"/>
    <property type="project" value="UniProtKB"/>
</dbReference>
<dbReference type="GO" id="GO:0070106">
    <property type="term" value="P:interleukin-27-mediated signaling pathway"/>
    <property type="evidence" value="ECO:0000318"/>
    <property type="project" value="GO_Central"/>
</dbReference>
<dbReference type="GO" id="GO:0045071">
    <property type="term" value="P:negative regulation of viral genome replication"/>
    <property type="evidence" value="ECO:0000318"/>
    <property type="project" value="GO_Central"/>
</dbReference>
<dbReference type="GO" id="GO:1903487">
    <property type="term" value="P:regulation of lactation"/>
    <property type="evidence" value="ECO:0000250"/>
    <property type="project" value="UniProtKB"/>
</dbReference>
<dbReference type="GO" id="GO:0009615">
    <property type="term" value="P:response to virus"/>
    <property type="evidence" value="ECO:0000304"/>
    <property type="project" value="UniProtKB"/>
</dbReference>
<dbReference type="GO" id="GO:0060337">
    <property type="term" value="P:type I interferon-mediated signaling pathway"/>
    <property type="evidence" value="ECO:0000250"/>
    <property type="project" value="UniProtKB"/>
</dbReference>
<dbReference type="CDD" id="cd05400">
    <property type="entry name" value="NT_2-5OAS_ClassI-CCAase"/>
    <property type="match status" value="2"/>
</dbReference>
<dbReference type="FunFam" id="1.10.1410.20:FF:000001">
    <property type="entry name" value="2'-5'-oligoadenylate synthetase 1"/>
    <property type="match status" value="2"/>
</dbReference>
<dbReference type="FunFam" id="3.30.460.10:FF:000007">
    <property type="entry name" value="2'-5'-oligoadenylate synthetase 1"/>
    <property type="match status" value="2"/>
</dbReference>
<dbReference type="Gene3D" id="1.10.1410.20">
    <property type="entry name" value="2'-5'-oligoadenylate synthetase 1, domain 2"/>
    <property type="match status" value="2"/>
</dbReference>
<dbReference type="Gene3D" id="3.30.460.10">
    <property type="entry name" value="Beta Polymerase, domain 2"/>
    <property type="match status" value="2"/>
</dbReference>
<dbReference type="InterPro" id="IPR018952">
    <property type="entry name" value="2-5-oligoAdlate_synth_1_dom2/C"/>
</dbReference>
<dbReference type="InterPro" id="IPR006117">
    <property type="entry name" value="2-5OAS_C_CS"/>
</dbReference>
<dbReference type="InterPro" id="IPR006116">
    <property type="entry name" value="NT_2-5OAS_ClassI-CCAase"/>
</dbReference>
<dbReference type="InterPro" id="IPR043519">
    <property type="entry name" value="NT_sf"/>
</dbReference>
<dbReference type="InterPro" id="IPR002934">
    <property type="entry name" value="Polymerase_NTP_transf_dom"/>
</dbReference>
<dbReference type="PANTHER" id="PTHR11258:SF3">
    <property type="entry name" value="2'-5'-OLIGOADENYLATE SYNTHASE 2"/>
    <property type="match status" value="1"/>
</dbReference>
<dbReference type="PANTHER" id="PTHR11258">
    <property type="entry name" value="2-5 OLIGOADENYLATE SYNTHETASE"/>
    <property type="match status" value="1"/>
</dbReference>
<dbReference type="Pfam" id="PF01909">
    <property type="entry name" value="NTP_transf_2"/>
    <property type="match status" value="1"/>
</dbReference>
<dbReference type="Pfam" id="PF10421">
    <property type="entry name" value="OAS1_C"/>
    <property type="match status" value="2"/>
</dbReference>
<dbReference type="Pfam" id="PF18144">
    <property type="entry name" value="SMODS"/>
    <property type="match status" value="1"/>
</dbReference>
<dbReference type="SUPFAM" id="SSF81301">
    <property type="entry name" value="Nucleotidyltransferase"/>
    <property type="match status" value="2"/>
</dbReference>
<dbReference type="SUPFAM" id="SSF81631">
    <property type="entry name" value="PAP/OAS1 substrate-binding domain"/>
    <property type="match status" value="2"/>
</dbReference>
<dbReference type="PROSITE" id="PS00833">
    <property type="entry name" value="25A_SYNTH_2"/>
    <property type="match status" value="2"/>
</dbReference>
<dbReference type="PROSITE" id="PS50152">
    <property type="entry name" value="25A_SYNTH_3"/>
    <property type="match status" value="2"/>
</dbReference>
<protein>
    <recommendedName>
        <fullName>2'-5'-oligoadenylate synthase 2</fullName>
        <shortName>(2-5')oligo(A) synthase 2</shortName>
        <shortName>2-5A synthase 2</shortName>
        <ecNumber>2.7.7.84</ecNumber>
    </recommendedName>
</protein>
<name>OAS2_BOVIN</name>
<proteinExistence type="evidence at transcript level"/>
<gene>
    <name type="primary">OAS2</name>
</gene>
<sequence>MGSRESHLYEKPSEKLEEFIQNHLRPSEDCQKDIDQSVDTICEVLQEPCPSLTVTGVAKGGSYGRRTVLRGNSDGILVVFFGDLEQFQDQEKRQYELLSKIWAQMKHCESTWKLAAKMELQNTNRSSRVTIQLSTKQQSITFNVLPAFNALGLSEKSSLWSYRELKRSLDMVKARPGEFSVCFTELQEKFFSNYPSKLKDLILLVKHWFQKCQEKLINSSLLPPYALELLTVYAWEQGCGAEDFDMAEGVRTVLRLIEKQEQLCVYWTVNYNFGDEIVRNILLSQLQAPRPVILDPTDPTNNVSMDNTCWLQLKHEAQNWLRSLRQNESPGPSWNVLPASLYITPGHLLDKFVKDFLQPNQTFQDQIKKALKIICSFLEENCFRHSTTKIQVIQGGSTVKGTALKTGSDASLVVFANSLKSYTSPKNERYNIIKEIHEQLEACRQEKDFEVKFEISKWKPPWVLSFTLKSKVLNESVDFDVLPAFNALGELKSGSTPSPRTYTELIHLYKPSDVFLEGEFSACFTKLQRNFVRSLPLKLKDLIRLLKHWYCGCEKKLKQKGSLPPKYALELLSIYAWEKGSGAQDFDMAEGFRTVLELVIQYQHLCVFWTVNYSFDDEILRNFLLGQIRRTRPVILDPADPTGDVGGGHRWCWHLLAKEATEWLSSLCFKDKSGCPIQPWNVPKKRVQTPGSCGAGIYSMVNEMHLLRSHRFLD</sequence>
<evidence type="ECO:0000250" key="1">
    <source>
        <dbReference type="UniProtKB" id="E9Q9A9"/>
    </source>
</evidence>
<evidence type="ECO:0000250" key="2">
    <source>
        <dbReference type="UniProtKB" id="P00973"/>
    </source>
</evidence>
<evidence type="ECO:0000250" key="3">
    <source>
        <dbReference type="UniProtKB" id="P29728"/>
    </source>
</evidence>
<evidence type="ECO:0000255" key="4"/>
<evidence type="ECO:0000305" key="5"/>
<organism>
    <name type="scientific">Bos taurus</name>
    <name type="common">Bovine</name>
    <dbReference type="NCBI Taxonomy" id="9913"/>
    <lineage>
        <taxon>Eukaryota</taxon>
        <taxon>Metazoa</taxon>
        <taxon>Chordata</taxon>
        <taxon>Craniata</taxon>
        <taxon>Vertebrata</taxon>
        <taxon>Euteleostomi</taxon>
        <taxon>Mammalia</taxon>
        <taxon>Eutheria</taxon>
        <taxon>Laurasiatheria</taxon>
        <taxon>Artiodactyla</taxon>
        <taxon>Ruminantia</taxon>
        <taxon>Pecora</taxon>
        <taxon>Bovidae</taxon>
        <taxon>Bovinae</taxon>
        <taxon>Bos</taxon>
    </lineage>
</organism>
<keyword id="KW-0051">Antiviral defense</keyword>
<keyword id="KW-0067">ATP-binding</keyword>
<keyword id="KW-0963">Cytoplasm</keyword>
<keyword id="KW-0325">Glycoprotein</keyword>
<keyword id="KW-0391">Immunity</keyword>
<keyword id="KW-0399">Innate immunity</keyword>
<keyword id="KW-0449">Lipoprotein</keyword>
<keyword id="KW-0460">Magnesium</keyword>
<keyword id="KW-0479">Metal-binding</keyword>
<keyword id="KW-0519">Myristate</keyword>
<keyword id="KW-0547">Nucleotide-binding</keyword>
<keyword id="KW-0548">Nucleotidyltransferase</keyword>
<keyword id="KW-1185">Reference proteome</keyword>
<keyword id="KW-0677">Repeat</keyword>
<keyword id="KW-0694">RNA-binding</keyword>
<keyword id="KW-0808">Transferase</keyword>
<accession>F1N3B8</accession>
<accession>Q53AV7</accession>
<comment type="function">
    <text evidence="1 3">Interferon-induced, dsRNA-activated antiviral enzyme which plays a critical role in cellular innate antiviral response. Activated by detection of double stranded RNA (dsRNA): polymerizes higher oligomers of 2'-5'-oligoadenylates (2-5A) from ATP which then bind to the inactive monomeric form of ribonuclease L (RNASEL) leading to its dimerization and subsequent activation. Activation of RNASEL leads to degradation of cellular as well as viral RNA, resulting in the inhibition of protein synthesis, thus terminating viral replication. Can mediate the antiviral effect via the classical RNASEL-dependent pathway or an alternative antiviral pathway independent of RNASEL. In addition, it may also play a role in other cellular processes such as apoptosis, cell growth, differentiation and gene regulation (By similarity). May act as a negative regulator of lactation, stopping lactation in virally infected mammary gland lobules, thereby preventing transmission of viruses to neonates (By similarity). Non-infected lobules would not be affected, allowing efficient pup feeding during infection (By similarity).</text>
</comment>
<comment type="catalytic activity">
    <reaction evidence="3">
        <text>3 ATP = 5'-triphosphoadenylyl-(2'-&gt;5')-adenylyl-(2'-&gt;5')-adenosine + 2 diphosphate</text>
        <dbReference type="Rhea" id="RHEA:34407"/>
        <dbReference type="ChEBI" id="CHEBI:30616"/>
        <dbReference type="ChEBI" id="CHEBI:33019"/>
        <dbReference type="ChEBI" id="CHEBI:67143"/>
        <dbReference type="EC" id="2.7.7.84"/>
    </reaction>
</comment>
<comment type="cofactor">
    <cofactor evidence="3">
        <name>Mg(2+)</name>
        <dbReference type="ChEBI" id="CHEBI:18420"/>
    </cofactor>
</comment>
<comment type="activity regulation">
    <text evidence="3">Produced as a latent enzyme which is activated by double stranded RNA (dsRNA) generated during the course of viral infection. The dsRNA activator must be at least 15 nucleotides long, and no modification of the 2'-hydroxyl group is tolerated. ssRNA or dsDNA do not act as activators. Strongly inhibited by copper, iron and zinc ions. Partially inhibited by cobalt and nickel ions.</text>
</comment>
<comment type="subunit">
    <text evidence="3">Homodimer.</text>
</comment>
<comment type="subcellular location">
    <subcellularLocation>
        <location evidence="3">Cytoplasm</location>
    </subcellularLocation>
    <subcellularLocation>
        <location evidence="3">Cytoplasm</location>
        <location evidence="3">Perinuclear region</location>
    </subcellularLocation>
</comment>
<comment type="PTM">
    <text evidence="3">Myristoylation is not essential for its activity.</text>
</comment>
<comment type="PTM">
    <text evidence="3">Glycosylated. Glycosylation is essential for its activity.</text>
</comment>
<comment type="similarity">
    <text evidence="5">Belongs to the 2-5A synthase family.</text>
</comment>
<feature type="initiator methionine" description="Removed" evidence="3">
    <location>
        <position position="1"/>
    </location>
</feature>
<feature type="chain" id="PRO_0000418627" description="2'-5'-oligoadenylate synthase 2">
    <location>
        <begin position="2"/>
        <end position="714"/>
    </location>
</feature>
<feature type="region of interest" description="OAS domain 1">
    <location>
        <begin position="11"/>
        <end position="336"/>
    </location>
</feature>
<feature type="region of interest" description="OAS domain 2">
    <location>
        <begin position="344"/>
        <end position="683"/>
    </location>
</feature>
<feature type="binding site" evidence="2">
    <location>
        <position position="397"/>
    </location>
    <ligand>
        <name>ATP</name>
        <dbReference type="ChEBI" id="CHEBI:30616"/>
    </ligand>
</feature>
<feature type="binding site" evidence="4">
    <location>
        <position position="409"/>
    </location>
    <ligand>
        <name>Mg(2+)</name>
        <dbReference type="ChEBI" id="CHEBI:18420"/>
        <note>catalytic</note>
    </ligand>
</feature>
<feature type="binding site" evidence="4">
    <location>
        <position position="480"/>
    </location>
    <ligand>
        <name>Mg(2+)</name>
        <dbReference type="ChEBI" id="CHEBI:18420"/>
        <note>catalytic</note>
    </ligand>
</feature>
<feature type="binding site" evidence="2">
    <location>
        <position position="544"/>
    </location>
    <ligand>
        <name>ATP</name>
        <dbReference type="ChEBI" id="CHEBI:30616"/>
    </ligand>
</feature>
<feature type="binding site" evidence="2">
    <location>
        <position position="547"/>
    </location>
    <ligand>
        <name>ATP</name>
        <dbReference type="ChEBI" id="CHEBI:30616"/>
    </ligand>
</feature>
<feature type="lipid moiety-binding region" description="N-myristoyl glycine" evidence="3">
    <location>
        <position position="2"/>
    </location>
</feature>
<feature type="sequence conflict" description="In Ref. 1; AAT44896." evidence="5" ref="1">
    <original>S</original>
    <variation>T</variation>
    <location>
        <position position="161"/>
    </location>
</feature>
<feature type="sequence conflict" description="In Ref. 1; AAT44896." evidence="5" ref="1">
    <original>S</original>
    <variation>P</variation>
    <location>
        <position position="219"/>
    </location>
</feature>
<feature type="sequence conflict" description="In Ref. 1; AAT44896." evidence="5" ref="1">
    <original>I</original>
    <variation>T</variation>
    <location>
        <position position="277"/>
    </location>
</feature>
<feature type="sequence conflict" description="In Ref. 1; AAT44896." evidence="5" ref="1">
    <original>A</original>
    <variation>V</variation>
    <location>
        <position position="522"/>
    </location>
</feature>
<feature type="sequence conflict" description="In Ref. 1; AAT44896." evidence="5" ref="1">
    <original>C</original>
    <variation>K</variation>
    <location>
        <position position="551"/>
    </location>
</feature>
<feature type="sequence conflict" description="In Ref. 1; AAT44896." evidence="5" ref="1">
    <original>S</original>
    <variation>T</variation>
    <location>
        <position position="573"/>
    </location>
</feature>